<organism>
    <name type="scientific">Malacoplasma penetrans (strain HF-2)</name>
    <name type="common">Mycoplasma penetrans</name>
    <dbReference type="NCBI Taxonomy" id="272633"/>
    <lineage>
        <taxon>Bacteria</taxon>
        <taxon>Bacillati</taxon>
        <taxon>Mycoplasmatota</taxon>
        <taxon>Mycoplasmoidales</taxon>
        <taxon>Mycoplasmoidaceae</taxon>
        <taxon>Malacoplasma</taxon>
    </lineage>
</organism>
<reference key="1">
    <citation type="journal article" date="2002" name="Nucleic Acids Res.">
        <title>The complete genomic sequence of Mycoplasma penetrans, an intracellular bacterial pathogen in humans.</title>
        <authorList>
            <person name="Sasaki Y."/>
            <person name="Ishikawa J."/>
            <person name="Yamashita A."/>
            <person name="Oshima K."/>
            <person name="Kenri T."/>
            <person name="Furuya K."/>
            <person name="Yoshino C."/>
            <person name="Horino A."/>
            <person name="Shiba T."/>
            <person name="Sasaki T."/>
            <person name="Hattori M."/>
        </authorList>
    </citation>
    <scope>NUCLEOTIDE SEQUENCE [LARGE SCALE GENOMIC DNA]</scope>
    <source>
        <strain>HF-2</strain>
    </source>
</reference>
<name>RF1_MALP2</name>
<proteinExistence type="inferred from homology"/>
<dbReference type="EMBL" id="BA000026">
    <property type="protein sequence ID" value="BAC43855.1"/>
    <property type="molecule type" value="Genomic_DNA"/>
</dbReference>
<dbReference type="RefSeq" id="WP_011076891.1">
    <property type="nucleotide sequence ID" value="NC_004432.1"/>
</dbReference>
<dbReference type="SMR" id="Q8EWY5"/>
<dbReference type="FunCoup" id="Q8EWY5">
    <property type="interactions" value="232"/>
</dbReference>
<dbReference type="STRING" id="272633.gene:10731156"/>
<dbReference type="KEGG" id="mpe:MYPE650"/>
<dbReference type="eggNOG" id="COG0216">
    <property type="taxonomic scope" value="Bacteria"/>
</dbReference>
<dbReference type="HOGENOM" id="CLU_036856_0_1_14"/>
<dbReference type="InParanoid" id="Q8EWY5"/>
<dbReference type="Proteomes" id="UP000002522">
    <property type="component" value="Chromosome"/>
</dbReference>
<dbReference type="GO" id="GO:0005737">
    <property type="term" value="C:cytoplasm"/>
    <property type="evidence" value="ECO:0007669"/>
    <property type="project" value="UniProtKB-SubCell"/>
</dbReference>
<dbReference type="GO" id="GO:0016149">
    <property type="term" value="F:translation release factor activity, codon specific"/>
    <property type="evidence" value="ECO:0007669"/>
    <property type="project" value="UniProtKB-UniRule"/>
</dbReference>
<dbReference type="FunFam" id="3.30.160.20:FF:000004">
    <property type="entry name" value="Peptide chain release factor 1"/>
    <property type="match status" value="1"/>
</dbReference>
<dbReference type="FunFam" id="3.30.70.1660:FF:000002">
    <property type="entry name" value="Peptide chain release factor 1"/>
    <property type="match status" value="1"/>
</dbReference>
<dbReference type="Gene3D" id="3.30.160.20">
    <property type="match status" value="1"/>
</dbReference>
<dbReference type="Gene3D" id="3.30.70.1660">
    <property type="match status" value="1"/>
</dbReference>
<dbReference type="Gene3D" id="6.10.140.1950">
    <property type="match status" value="1"/>
</dbReference>
<dbReference type="HAMAP" id="MF_00093">
    <property type="entry name" value="Rel_fac_1"/>
    <property type="match status" value="1"/>
</dbReference>
<dbReference type="InterPro" id="IPR005139">
    <property type="entry name" value="PCRF"/>
</dbReference>
<dbReference type="InterPro" id="IPR000352">
    <property type="entry name" value="Pep_chain_release_fac_I"/>
</dbReference>
<dbReference type="InterPro" id="IPR045853">
    <property type="entry name" value="Pep_chain_release_fac_I_sf"/>
</dbReference>
<dbReference type="InterPro" id="IPR050057">
    <property type="entry name" value="Prokaryotic/Mito_RF"/>
</dbReference>
<dbReference type="InterPro" id="IPR004373">
    <property type="entry name" value="RF-1"/>
</dbReference>
<dbReference type="NCBIfam" id="TIGR00019">
    <property type="entry name" value="prfA"/>
    <property type="match status" value="1"/>
</dbReference>
<dbReference type="NCBIfam" id="NF001859">
    <property type="entry name" value="PRK00591.1"/>
    <property type="match status" value="1"/>
</dbReference>
<dbReference type="PANTHER" id="PTHR43804">
    <property type="entry name" value="LD18447P"/>
    <property type="match status" value="1"/>
</dbReference>
<dbReference type="PANTHER" id="PTHR43804:SF7">
    <property type="entry name" value="LD18447P"/>
    <property type="match status" value="1"/>
</dbReference>
<dbReference type="Pfam" id="PF03462">
    <property type="entry name" value="PCRF"/>
    <property type="match status" value="1"/>
</dbReference>
<dbReference type="Pfam" id="PF00472">
    <property type="entry name" value="RF-1"/>
    <property type="match status" value="1"/>
</dbReference>
<dbReference type="SMART" id="SM00937">
    <property type="entry name" value="PCRF"/>
    <property type="match status" value="1"/>
</dbReference>
<dbReference type="SUPFAM" id="SSF75620">
    <property type="entry name" value="Release factor"/>
    <property type="match status" value="1"/>
</dbReference>
<dbReference type="PROSITE" id="PS00745">
    <property type="entry name" value="RF_PROK_I"/>
    <property type="match status" value="1"/>
</dbReference>
<gene>
    <name evidence="1" type="primary">prfA</name>
    <name type="ordered locus">MYPE650</name>
</gene>
<keyword id="KW-0963">Cytoplasm</keyword>
<keyword id="KW-0488">Methylation</keyword>
<keyword id="KW-0648">Protein biosynthesis</keyword>
<keyword id="KW-1185">Reference proteome</keyword>
<accession>Q8EWY5</accession>
<sequence length="359" mass="41022">MIYNEKLYNSLLSMEEKFNDLNKELETEGLSVKRMSEINKSIKETTPIVEKFKEYKRTLNDIDSAEKLIKSEKDNEIIELAQLELSEKKPLIEKYEYELKVLLLPKDPNDDKNVIVEMRPAAGGDESSIFVGDLFSAYKRYADSLGWKVKMLEVQESSHGYGFISFMINGENVYSKMKFESGVHRVQRVPATESKGRVHTSTITVAVLPELEEVELVINNSDLKIDTYRASGAGGQHINKTESAVRITHIPTGIFVACQEGKSQIENRETAMKMLRAKLWEKKEEENRKNISDLRKGQVGTGERAEKIRTYNYPQNRVTDHRINLTLNKLDNVMLGNLSEIIDSLISHDEAVKMQEAKI</sequence>
<protein>
    <recommendedName>
        <fullName evidence="1">Peptide chain release factor 1</fullName>
        <shortName evidence="1">RF-1</shortName>
    </recommendedName>
</protein>
<feature type="chain" id="PRO_0000177708" description="Peptide chain release factor 1">
    <location>
        <begin position="1"/>
        <end position="359"/>
    </location>
</feature>
<feature type="modified residue" description="N5-methylglutamine" evidence="1">
    <location>
        <position position="236"/>
    </location>
</feature>
<evidence type="ECO:0000255" key="1">
    <source>
        <dbReference type="HAMAP-Rule" id="MF_00093"/>
    </source>
</evidence>
<comment type="function">
    <text evidence="1">Peptide chain release factor 1 directs the termination of translation in response to the peptide chain termination codons UAG and UAA.</text>
</comment>
<comment type="subcellular location">
    <subcellularLocation>
        <location evidence="1">Cytoplasm</location>
    </subcellularLocation>
</comment>
<comment type="PTM">
    <text evidence="1">Methylated by PrmC. Methylation increases the termination efficiency of RF1.</text>
</comment>
<comment type="similarity">
    <text evidence="1">Belongs to the prokaryotic/mitochondrial release factor family.</text>
</comment>